<feature type="signal peptide" evidence="2">
    <location>
        <begin position="1"/>
        <end position="19"/>
    </location>
</feature>
<feature type="chain" id="PRO_5008116124" description="Ovochymase" evidence="2">
    <location>
        <begin position="20"/>
        <end position="1575"/>
    </location>
</feature>
<feature type="domain" description="Peptidase S1 1" evidence="4">
    <location>
        <begin position="36"/>
        <end position="280"/>
    </location>
</feature>
<feature type="domain" description="CUB 1" evidence="3">
    <location>
        <begin position="300"/>
        <end position="423"/>
    </location>
</feature>
<feature type="domain" description="CUB 2" evidence="3">
    <location>
        <begin position="432"/>
        <end position="545"/>
    </location>
</feature>
<feature type="domain" description="Peptidase S1 2" evidence="4">
    <location>
        <begin position="575"/>
        <end position="810"/>
    </location>
</feature>
<feature type="domain" description="CUB 3" evidence="3">
    <location>
        <begin position="830"/>
        <end position="949"/>
    </location>
</feature>
<feature type="domain" description="CUB 4" evidence="3">
    <location>
        <begin position="956"/>
        <end position="1070"/>
    </location>
</feature>
<feature type="domain" description="CUB 5" evidence="3">
    <location>
        <begin position="1080"/>
        <end position="1197"/>
    </location>
</feature>
<feature type="domain" description="CUB 6" evidence="3">
    <location>
        <begin position="1221"/>
        <end position="1341"/>
    </location>
</feature>
<feature type="domain" description="Peptidase S1 3" evidence="4">
    <location>
        <begin position="1314"/>
        <end position="1575"/>
    </location>
</feature>
<feature type="active site" description="Charge relay system" evidence="4">
    <location>
        <position position="76"/>
    </location>
</feature>
<feature type="active site" description="Charge relay system" evidence="4">
    <location>
        <position position="132"/>
    </location>
</feature>
<feature type="active site" description="Charge relay system" evidence="4">
    <location>
        <position position="227"/>
    </location>
</feature>
<feature type="active site" description="Charge relay system" evidence="4">
    <location>
        <position position="617"/>
    </location>
</feature>
<feature type="active site" description="Charge relay system" evidence="4">
    <location>
        <position position="665"/>
    </location>
</feature>
<feature type="active site" description="Charge relay system" evidence="4">
    <location>
        <position position="760"/>
    </location>
</feature>
<feature type="glycosylation site" description="N-linked (GlcNAc...) asparagine" evidence="5">
    <location>
        <position position="277"/>
    </location>
</feature>
<feature type="glycosylation site" description="N-linked (GlcNAc...) asparagine" evidence="5">
    <location>
        <position position="303"/>
    </location>
</feature>
<feature type="glycosylation site" description="N-linked (GlcNAc...) asparagine" evidence="5">
    <location>
        <position position="497"/>
    </location>
</feature>
<feature type="glycosylation site" description="N-linked (GlcNAc...) asparagine" evidence="5">
    <location>
        <position position="513"/>
    </location>
</feature>
<feature type="glycosylation site" description="N-linked (GlcNAc...) asparagine" evidence="5">
    <location>
        <position position="549"/>
    </location>
</feature>
<feature type="glycosylation site" description="N-linked (GlcNAc...) asparagine" evidence="5">
    <location>
        <position position="748"/>
    </location>
</feature>
<feature type="glycosylation site" description="N-linked (GlcNAc...) asparagine" evidence="5">
    <location>
        <position position="810"/>
    </location>
</feature>
<feature type="glycosylation site" description="N-linked (GlcNAc...) asparagine" evidence="5">
    <location>
        <position position="968"/>
    </location>
</feature>
<feature type="glycosylation site" description="N-linked (GlcNAc...) asparagine" evidence="5">
    <location>
        <position position="1027"/>
    </location>
</feature>
<feature type="glycosylation site" description="N-linked (GlcNAc...) asparagine" evidence="5">
    <location>
        <position position="1087"/>
    </location>
</feature>
<feature type="glycosylation site" description="N-linked (GlcNAc...) asparagine" evidence="5">
    <location>
        <position position="1090"/>
    </location>
</feature>
<feature type="glycosylation site" description="N-linked (GlcNAc...) asparagine" evidence="5">
    <location>
        <position position="1273"/>
    </location>
</feature>
<feature type="glycosylation site" description="N-linked (GlcNAc...) asparagine" evidence="5">
    <location>
        <position position="1511"/>
    </location>
</feature>
<feature type="disulfide bond" evidence="4">
    <location>
        <begin position="61"/>
        <end position="77"/>
    </location>
</feature>
<feature type="disulfide bond" evidence="4">
    <location>
        <begin position="166"/>
        <end position="233"/>
    </location>
</feature>
<feature type="disulfide bond" evidence="4">
    <location>
        <begin position="199"/>
        <end position="212"/>
    </location>
</feature>
<feature type="disulfide bond" evidence="4">
    <location>
        <begin position="223"/>
        <end position="256"/>
    </location>
</feature>
<feature type="disulfide bond" evidence="3">
    <location>
        <begin position="300"/>
        <end position="330"/>
    </location>
</feature>
<feature type="disulfide bond" evidence="3">
    <location>
        <begin position="358"/>
        <end position="386"/>
    </location>
</feature>
<feature type="disulfide bond" evidence="3">
    <location>
        <begin position="432"/>
        <end position="460"/>
    </location>
</feature>
<feature type="disulfide bond" evidence="3">
    <location>
        <begin position="486"/>
        <end position="507"/>
    </location>
</feature>
<feature type="disulfide bond" evidence="4">
    <location>
        <begin position="602"/>
        <end position="618"/>
    </location>
</feature>
<feature type="disulfide bond" evidence="4">
    <location>
        <begin position="700"/>
        <end position="766"/>
    </location>
</feature>
<feature type="disulfide bond" evidence="4">
    <location>
        <begin position="730"/>
        <end position="745"/>
    </location>
</feature>
<feature type="disulfide bond" evidence="4">
    <location>
        <begin position="756"/>
        <end position="786"/>
    </location>
</feature>
<feature type="disulfide bond" evidence="3">
    <location>
        <begin position="830"/>
        <end position="859"/>
    </location>
</feature>
<feature type="disulfide bond" evidence="3">
    <location>
        <begin position="889"/>
        <end position="913"/>
    </location>
</feature>
<feature type="disulfide bond" evidence="3">
    <location>
        <begin position="956"/>
        <end position="984"/>
    </location>
</feature>
<feature type="disulfide bond" evidence="3">
    <location>
        <begin position="1012"/>
        <end position="1034"/>
    </location>
</feature>
<feature type="disulfide bond" evidence="3">
    <location>
        <begin position="1080"/>
        <end position="1108"/>
    </location>
</feature>
<feature type="disulfide bond" evidence="3">
    <location>
        <begin position="1135"/>
        <end position="1158"/>
    </location>
</feature>
<feature type="disulfide bond" evidence="3">
    <location>
        <begin position="1221"/>
        <end position="1246"/>
    </location>
</feature>
<feature type="disulfide bond" evidence="4">
    <location>
        <begin position="1376"/>
        <end position="1392"/>
    </location>
</feature>
<feature type="disulfide bond" evidence="4">
    <location>
        <begin position="1493"/>
        <end position="1507"/>
    </location>
</feature>
<comment type="function">
    <text evidence="6">May be responsible for elevation of the vitelline coat at the late developmental stage of oogenesis and during fertilization in ovarian eggs.</text>
</comment>
<comment type="subcellular location">
    <subcellularLocation>
        <location evidence="1">Secreted</location>
    </subcellularLocation>
</comment>
<comment type="tissue specificity">
    <text evidence="6">Expressed in the testis and ovary. Expressed in the gonads and gametes. Expressed in the follicle cells covering the vitelline coat of ovarian egg.</text>
</comment>
<comment type="similarity">
    <text evidence="4">Belongs to the peptidase S1 family.</text>
</comment>
<dbReference type="EC" id="3.4.21.-" evidence="4"/>
<dbReference type="EMBL" id="LC102208">
    <property type="protein sequence ID" value="BAV13855.1"/>
    <property type="molecule type" value="mRNA"/>
</dbReference>
<dbReference type="SMR" id="A0A182C2Z2"/>
<dbReference type="GlyCosmos" id="A0A182C2Z2">
    <property type="glycosylation" value="13 sites, No reported glycans"/>
</dbReference>
<dbReference type="GO" id="GO:0005576">
    <property type="term" value="C:extracellular region"/>
    <property type="evidence" value="ECO:0007669"/>
    <property type="project" value="UniProtKB-SubCell"/>
</dbReference>
<dbReference type="GO" id="GO:0004252">
    <property type="term" value="F:serine-type endopeptidase activity"/>
    <property type="evidence" value="ECO:0007669"/>
    <property type="project" value="InterPro"/>
</dbReference>
<dbReference type="GO" id="GO:0009566">
    <property type="term" value="P:fertilization"/>
    <property type="evidence" value="ECO:0000314"/>
    <property type="project" value="UniProtKB"/>
</dbReference>
<dbReference type="GO" id="GO:0048477">
    <property type="term" value="P:oogenesis"/>
    <property type="evidence" value="ECO:0000314"/>
    <property type="project" value="UniProtKB"/>
</dbReference>
<dbReference type="GO" id="GO:0006508">
    <property type="term" value="P:proteolysis"/>
    <property type="evidence" value="ECO:0007669"/>
    <property type="project" value="UniProtKB-KW"/>
</dbReference>
<dbReference type="CDD" id="cd00041">
    <property type="entry name" value="CUB"/>
    <property type="match status" value="4"/>
</dbReference>
<dbReference type="CDD" id="cd00190">
    <property type="entry name" value="Tryp_SPc"/>
    <property type="match status" value="3"/>
</dbReference>
<dbReference type="FunFam" id="2.60.120.290:FF:000013">
    <property type="entry name" value="Membrane frizzled-related protein"/>
    <property type="match status" value="1"/>
</dbReference>
<dbReference type="FunFam" id="2.60.120.290:FF:000005">
    <property type="entry name" value="Procollagen C-endopeptidase enhancer 1"/>
    <property type="match status" value="2"/>
</dbReference>
<dbReference type="FunFam" id="2.40.10.10:FF:000003">
    <property type="entry name" value="Transmembrane serine protease 3"/>
    <property type="match status" value="2"/>
</dbReference>
<dbReference type="Gene3D" id="2.60.120.290">
    <property type="entry name" value="Spermadhesin, CUB domain"/>
    <property type="match status" value="5"/>
</dbReference>
<dbReference type="Gene3D" id="2.40.10.10">
    <property type="entry name" value="Trypsin-like serine proteases"/>
    <property type="match status" value="4"/>
</dbReference>
<dbReference type="InterPro" id="IPR000859">
    <property type="entry name" value="CUB_dom"/>
</dbReference>
<dbReference type="InterPro" id="IPR009003">
    <property type="entry name" value="Peptidase_S1_PA"/>
</dbReference>
<dbReference type="InterPro" id="IPR043504">
    <property type="entry name" value="Peptidase_S1_PA_chymotrypsin"/>
</dbReference>
<dbReference type="InterPro" id="IPR001314">
    <property type="entry name" value="Peptidase_S1A"/>
</dbReference>
<dbReference type="InterPro" id="IPR035914">
    <property type="entry name" value="Sperma_CUB_dom_sf"/>
</dbReference>
<dbReference type="InterPro" id="IPR001254">
    <property type="entry name" value="Trypsin_dom"/>
</dbReference>
<dbReference type="InterPro" id="IPR018114">
    <property type="entry name" value="TRYPSIN_HIS"/>
</dbReference>
<dbReference type="InterPro" id="IPR033116">
    <property type="entry name" value="TRYPSIN_SER"/>
</dbReference>
<dbReference type="PANTHER" id="PTHR24252">
    <property type="entry name" value="ACROSIN-RELATED"/>
    <property type="match status" value="1"/>
</dbReference>
<dbReference type="PANTHER" id="PTHR24252:SF7">
    <property type="entry name" value="HYALIN"/>
    <property type="match status" value="1"/>
</dbReference>
<dbReference type="Pfam" id="PF00431">
    <property type="entry name" value="CUB"/>
    <property type="match status" value="5"/>
</dbReference>
<dbReference type="Pfam" id="PF00089">
    <property type="entry name" value="Trypsin"/>
    <property type="match status" value="3"/>
</dbReference>
<dbReference type="PRINTS" id="PR00722">
    <property type="entry name" value="CHYMOTRYPSIN"/>
</dbReference>
<dbReference type="SMART" id="SM00042">
    <property type="entry name" value="CUB"/>
    <property type="match status" value="6"/>
</dbReference>
<dbReference type="SMART" id="SM00020">
    <property type="entry name" value="Tryp_SPc"/>
    <property type="match status" value="3"/>
</dbReference>
<dbReference type="SUPFAM" id="SSF49854">
    <property type="entry name" value="Spermadhesin, CUB domain"/>
    <property type="match status" value="6"/>
</dbReference>
<dbReference type="SUPFAM" id="SSF50494">
    <property type="entry name" value="Trypsin-like serine proteases"/>
    <property type="match status" value="3"/>
</dbReference>
<dbReference type="PROSITE" id="PS01180">
    <property type="entry name" value="CUB"/>
    <property type="match status" value="6"/>
</dbReference>
<dbReference type="PROSITE" id="PS50240">
    <property type="entry name" value="TRYPSIN_DOM"/>
    <property type="match status" value="3"/>
</dbReference>
<dbReference type="PROSITE" id="PS00134">
    <property type="entry name" value="TRYPSIN_HIS"/>
    <property type="match status" value="2"/>
</dbReference>
<dbReference type="PROSITE" id="PS00135">
    <property type="entry name" value="TRYPSIN_SER"/>
    <property type="match status" value="2"/>
</dbReference>
<evidence type="ECO:0000250" key="1">
    <source>
        <dbReference type="UniProtKB" id="P79953"/>
    </source>
</evidence>
<evidence type="ECO:0000255" key="2"/>
<evidence type="ECO:0000255" key="3">
    <source>
        <dbReference type="PROSITE-ProRule" id="PRU00059"/>
    </source>
</evidence>
<evidence type="ECO:0000255" key="4">
    <source>
        <dbReference type="PROSITE-ProRule" id="PRU00274"/>
    </source>
</evidence>
<evidence type="ECO:0000255" key="5">
    <source>
        <dbReference type="PROSITE-ProRule" id="PRU00498"/>
    </source>
</evidence>
<evidence type="ECO:0000269" key="6">
    <source>
    </source>
</evidence>
<evidence type="ECO:0000303" key="7">
    <source>
    </source>
</evidence>
<protein>
    <recommendedName>
        <fullName evidence="7">Ovochymase</fullName>
        <shortName evidence="7">HrOVCH</shortName>
        <ecNumber evidence="4">3.4.21.-</ecNumber>
    </recommendedName>
</protein>
<sequence length="1575" mass="174957">MIVTFVALALSCCTPQVTADCGLRPRLQSAIITGRIVGGEMAKLGEFPWQAAFLYKHVQVCGGTIIDTTWILSAAHCFDPHMYKLQSIKKEDALIRVADLDKTDDTDEGEMTFEVKDIIIHEQYNRQTFDNDIMLIEILGSITYGPTVQPACIPGANDAVADGTKCLISGWGDTQDHVHNRWPDKLQKAQVEVFARAQCLAAYPESTENMICAGLRTGGIDSCQGDSGGPLACPFTENTAQPTFFLQGIVSWGRGCALDGFPGVYTEVRKYSSWIANYTQHLLQDRNADVATFTITGDPCSSNGSIISGSEGDFSSPGFYSGSYTDNLDCKWIIQIPDIGSRIQLSFTEFGVEYHTFCWYDDVKVYSGAVGNIASADAADLLGSHCGMNIPSDLLSDGSSMTVIFHSDYMTHTLGFRAVFHAVSADVSQSGCGGIRELLTDHGEFSSKHYPNYYDADSICECFITAPTGKTIELNFLSFRLAGSDCADNVAIYDGLNSSYPRIIRLCINQGFNVTVPSSSNTMFVSFKTDGQVQDVGFEAYYYFSSNGNSTDDTDYSQCGFSSTPINADQTAARIVNGDIAIAGSWPWQISIRLCDTCNHYCGGSIISPSWIVTAAHCIESSAHITYIRAGDFDRFTIEISETIVPVAQIFIHPDYQKDLPNNADIALLKLANPLSYSSTIRPVCFPSQISTIPEENAECYVTGWGLTEENVMAQKLREAKLPLMPYDQCLNVYTSYVLNENMLCAGNISSGIDTCLGDSGGPFVCRKSRNDPWILYGVSAFGRECGSSRYPGVYTKVTRYIDWIIATANVSTVTSVVEEHDPTEFEQGCIQLLVLSNHEGDLSSPEYPELYGEGMLDCQWKIVLMDRTKSLNINFRFSHSQQDTAAACSLANIRISESYSDGTVGRQYGPYCGSSESILISSLHDLVVSLHNSQSQVKIGLKLEYRLEELEQSGCGQLKHLIENKGNFSSINYPNIYSANSHCEWYLHASIATHYLQISLSQFSLENAYQCRYDFLTVIDVTENGNISHGPYCGNSIPHVITGHGLFHIKFRSDASLNYKGFFASFVELNERPQEESGCGGVKFLNGTNGTFQTAGFPLAYEANLDCTWVIEVEDGYKVRLNFQQFSLESSSSCKYDWAMLYNGEFAFEAQRIDTLCGYDVKLEDIFESTSNVMRIDFHSDFSFNKQGFLAMYTAVSPGSSRSSVHQRENHLQEKRSGGCQDSIFTDEEGVIEYKQGDHTGNTRCLFRILTNHLHVIRLWLRKLSSLNLHENDSIKIYDKIDVDDIYSGVVKPVFQFTGIIGYLDSLPAYLDYNGGEISMLFSSDGQHGDTSFELIYKLMQDKSSTTNPKQLWNDHHGKWPWMVSLFGSSKYYFCSGVIISSRWIATAATCNLRSSEIHIIFPEGTNPKKIWEVEKIVVHPEFKMIYNVPQNDLALIQLVDPIEHIPPVCLPVASNIYSDCHVLKIPRLAGSAAFPDIVRISSVDTLAHDICMREWHLRITDDMLCGRINGTNSCQRDVGGPLVCQSPSDDAWYFVGISSWGPKICNDNTAHHRLPDVYVSVAYFLKWITKIIQ</sequence>
<keyword id="KW-1015">Disulfide bond</keyword>
<keyword id="KW-0325">Glycoprotein</keyword>
<keyword id="KW-0378">Hydrolase</keyword>
<keyword id="KW-0645">Protease</keyword>
<keyword id="KW-0677">Repeat</keyword>
<keyword id="KW-0964">Secreted</keyword>
<keyword id="KW-0720">Serine protease</keyword>
<keyword id="KW-0732">Signal</keyword>
<reference key="1">
    <citation type="journal article" date="2016" name="Mol. Reprod. Dev.">
        <title>Follicle cell trypsin-like protease HrOvochymase: Its cDNA cloning, localization, and involvement in the late stage of oogenesis in the ascidian Halocynthia roretzi.</title>
        <authorList>
            <person name="Mino M."/>
            <person name="Sawada H."/>
        </authorList>
    </citation>
    <scope>NUCLEOTIDE SEQUENCE [MRNA]</scope>
    <scope>TISSUE SPECIFICITY</scope>
    <scope>IDENTIFICATION BY MASS SPECTROMETRY</scope>
    <scope>FUNCTION</scope>
</reference>
<accession>A0A182C2Z2</accession>
<organism>
    <name type="scientific">Halocynthia roretzi</name>
    <name type="common">Sea squirt</name>
    <name type="synonym">Cynthia roretzi</name>
    <dbReference type="NCBI Taxonomy" id="7729"/>
    <lineage>
        <taxon>Eukaryota</taxon>
        <taxon>Metazoa</taxon>
        <taxon>Chordata</taxon>
        <taxon>Tunicata</taxon>
        <taxon>Ascidiacea</taxon>
        <taxon>Stolidobranchia</taxon>
        <taxon>Pyuridae</taxon>
        <taxon>Halocynthia</taxon>
    </lineage>
</organism>
<proteinExistence type="evidence at protein level"/>
<gene>
    <name evidence="7" type="primary">OVCH</name>
</gene>
<name>OVCH_HALRO</name>